<accession>E5AD52</accession>
<sequence>MNQMQPYADVHQPHMSTAAHAPASGPPAGLSHYSYPHQPSMMQPQQQQHQYGGQPTGYPYAYNNGVPSQLPASSSMNNALVPSTLQLPAMSAGAPNSSMPGSQSYQSHTFDHTGQVAPPGMKPRVTATLWEDEGSLCFQVEAKGVCVARREDNHMINGTKLLNVAGMTRGRRDGILKSEKTRHVVKIGPMHLKGVWIPFERALEFANKEKITEQLYPLFVHDIGALLYHPSNQTRASVGGAAMAAVDRNRRPDSMQTQQRYMAGPTTSQAPSLHHHHSMTNSVGSAMSQPPHAIQPHPSSGRPSLDRAHTFPTPPTSASSMMGMGNQGSSYEWNGANVQQHPQGNQPLSIDTGLSNARSVPTTPASTPPGAVQQGIPYGSSQSYDGSRPMYSAPPAQPSQYAQGQPMMSYRPDNAYPKTEMAPPSRISDVPEEGEVKASDGMMPQGNEQVAAPPAGGEEENEYTHSSAPYNGNRGPYGYNPNGPPGPMHADHTHLSPEMTGSPHQNGSGRATPRTATNGQAQWGSSYPTPQRQAPPSSNLYNVMSDPRGAPNGNAAHDAYQGPGAVPQYASQGYAPTNGVNSSGKRGRDEEDAETYRPDSVQGDDMGGLKRRKTMEGGAVGQTYAQDPSPGLQRAHTLAAQRARR</sequence>
<keyword id="KW-0183">Conidiation</keyword>
<keyword id="KW-0238">DNA-binding</keyword>
<keyword id="KW-0539">Nucleus</keyword>
<keyword id="KW-1185">Reference proteome</keyword>
<keyword id="KW-0749">Sporulation</keyword>
<keyword id="KW-0804">Transcription</keyword>
<keyword id="KW-0805">Transcription regulation</keyword>
<reference key="1">
    <citation type="journal article" date="2011" name="Nat. Commun.">
        <title>Effector diversification within compartments of the Leptosphaeria maculans genome affected by Repeat-Induced Point mutations.</title>
        <authorList>
            <person name="Rouxel T."/>
            <person name="Grandaubert J."/>
            <person name="Hane J.K."/>
            <person name="Hoede C."/>
            <person name="van de Wouw A.P."/>
            <person name="Couloux A."/>
            <person name="Dominguez V."/>
            <person name="Anthouard V."/>
            <person name="Bally P."/>
            <person name="Bourras S."/>
            <person name="Cozijnsen A.J."/>
            <person name="Ciuffetti L.M."/>
            <person name="Degrave A."/>
            <person name="Dilmaghani A."/>
            <person name="Duret L."/>
            <person name="Fudal I."/>
            <person name="Goodwin S.B."/>
            <person name="Gout L."/>
            <person name="Glaser N."/>
            <person name="Linglin J."/>
            <person name="Kema G.H.J."/>
            <person name="Lapalu N."/>
            <person name="Lawrence C.B."/>
            <person name="May K."/>
            <person name="Meyer M."/>
            <person name="Ollivier B."/>
            <person name="Poulain J."/>
            <person name="Schoch C.L."/>
            <person name="Simon A."/>
            <person name="Spatafora J.W."/>
            <person name="Stachowiak A."/>
            <person name="Turgeon B.G."/>
            <person name="Tyler B.M."/>
            <person name="Vincent D."/>
            <person name="Weissenbach J."/>
            <person name="Amselem J."/>
            <person name="Quesneville H."/>
            <person name="Oliver R.P."/>
            <person name="Wincker P."/>
            <person name="Balesdent M.-H."/>
            <person name="Howlett B.J."/>
        </authorList>
    </citation>
    <scope>NUCLEOTIDE SEQUENCE [LARGE SCALE GENOMIC DNA]</scope>
    <source>
        <strain>JN3 / isolate v23.1.3 / race Av1-4-5-6-7-8</strain>
    </source>
</reference>
<reference key="2">
    <citation type="journal article" date="2015" name="Mol. Plant Pathol.">
        <title>The APSES transcription factor LmStuA is required for sporulation, pathogenic development and effector gene expression in Leptosphaeria maculans.</title>
        <authorList>
            <person name="Soyer J.L."/>
            <person name="Hamiot A."/>
            <person name="Ollivier B."/>
            <person name="Balesdent M.H."/>
            <person name="Rouxel T."/>
            <person name="Fudal I."/>
        </authorList>
    </citation>
    <scope>INDUCTION</scope>
    <scope>DISRUPTION PHENOTYPE</scope>
    <scope>FUNCTION</scope>
</reference>
<dbReference type="EMBL" id="FP929139">
    <property type="protein sequence ID" value="CBY02404.1"/>
    <property type="status" value="ALT_INIT"/>
    <property type="molecule type" value="Genomic_DNA"/>
</dbReference>
<dbReference type="RefSeq" id="XP_003845883.1">
    <property type="nucleotide sequence ID" value="XM_003845835.1"/>
</dbReference>
<dbReference type="SMR" id="E5AD52"/>
<dbReference type="FunCoup" id="E5AD52">
    <property type="interactions" value="1140"/>
</dbReference>
<dbReference type="STRING" id="985895.E5AD52"/>
<dbReference type="VEuPathDB" id="FungiDB:LEMA_P011910.1"/>
<dbReference type="eggNOG" id="ENOG502QW2C">
    <property type="taxonomic scope" value="Eukaryota"/>
</dbReference>
<dbReference type="HOGENOM" id="CLU_016460_0_0_1"/>
<dbReference type="InParanoid" id="E5AD52"/>
<dbReference type="OrthoDB" id="5407653at2759"/>
<dbReference type="PHI-base" id="PHI:4519"/>
<dbReference type="Proteomes" id="UP000002668">
    <property type="component" value="Genome"/>
</dbReference>
<dbReference type="GO" id="GO:0005634">
    <property type="term" value="C:nucleus"/>
    <property type="evidence" value="ECO:0007669"/>
    <property type="project" value="UniProtKB-SubCell"/>
</dbReference>
<dbReference type="GO" id="GO:0003700">
    <property type="term" value="F:DNA-binding transcription factor activity"/>
    <property type="evidence" value="ECO:0007669"/>
    <property type="project" value="TreeGrafter"/>
</dbReference>
<dbReference type="GO" id="GO:0043565">
    <property type="term" value="F:sequence-specific DNA binding"/>
    <property type="evidence" value="ECO:0007669"/>
    <property type="project" value="TreeGrafter"/>
</dbReference>
<dbReference type="GO" id="GO:0048315">
    <property type="term" value="P:conidium formation"/>
    <property type="evidence" value="ECO:0007669"/>
    <property type="project" value="UniProtKB-KW"/>
</dbReference>
<dbReference type="GO" id="GO:0045944">
    <property type="term" value="P:positive regulation of transcription by RNA polymerase II"/>
    <property type="evidence" value="ECO:0007669"/>
    <property type="project" value="TreeGrafter"/>
</dbReference>
<dbReference type="GO" id="GO:0030435">
    <property type="term" value="P:sporulation resulting in formation of a cellular spore"/>
    <property type="evidence" value="ECO:0007669"/>
    <property type="project" value="UniProtKB-KW"/>
</dbReference>
<dbReference type="FunFam" id="3.10.260.10:FF:000003">
    <property type="entry name" value="Ascospore maturation 1 protein"/>
    <property type="match status" value="1"/>
</dbReference>
<dbReference type="Gene3D" id="3.10.260.10">
    <property type="entry name" value="Transcription regulator HTH, APSES-type DNA-binding domain"/>
    <property type="match status" value="1"/>
</dbReference>
<dbReference type="InterPro" id="IPR029790">
    <property type="entry name" value="EFG1/Phd1/StuA"/>
</dbReference>
<dbReference type="InterPro" id="IPR036887">
    <property type="entry name" value="HTH_APSES_sf"/>
</dbReference>
<dbReference type="InterPro" id="IPR018004">
    <property type="entry name" value="KilA/APSES_HTH"/>
</dbReference>
<dbReference type="InterPro" id="IPR003163">
    <property type="entry name" value="Tscrpt_reg_HTH_APSES-type"/>
</dbReference>
<dbReference type="PANTHER" id="PTHR47792">
    <property type="entry name" value="PROTEIN SOK2-RELATED"/>
    <property type="match status" value="1"/>
</dbReference>
<dbReference type="PANTHER" id="PTHR47792:SF1">
    <property type="entry name" value="PROTEIN SOK2-RELATED"/>
    <property type="match status" value="1"/>
</dbReference>
<dbReference type="Pfam" id="PF04383">
    <property type="entry name" value="KilA-N"/>
    <property type="match status" value="1"/>
</dbReference>
<dbReference type="SMART" id="SM01252">
    <property type="entry name" value="KilA-N"/>
    <property type="match status" value="1"/>
</dbReference>
<dbReference type="SUPFAM" id="SSF54616">
    <property type="entry name" value="DNA-binding domain of Mlu1-box binding protein MBP1"/>
    <property type="match status" value="1"/>
</dbReference>
<dbReference type="PROSITE" id="PS51299">
    <property type="entry name" value="HTH_APSES"/>
    <property type="match status" value="1"/>
</dbReference>
<comment type="function">
    <text evidence="1 4">Transcription factor that regulates asexual reproduction (By similarity). Binds the StuA-response elements (StRE) with the consensus sequence 5'-(A/T)CGCG(T/A)N(A/C)-3' at the promoters of target genes (By similarity). Regulates the expression of several effector genes (AvrLm1, AvrLm6 and AvrLm4-7) during infection stage (PubMed:25727237).</text>
</comment>
<comment type="subcellular location">
    <subcellularLocation>
        <location evidence="1">Nucleus</location>
    </subcellularLocation>
</comment>
<comment type="induction">
    <text evidence="4">Expression is induced during mycelial growth and at 14 days after infection, corresponding to the development of pycnidia on oilseed rape leaves (PubMed:25727237).</text>
</comment>
<comment type="disruption phenotype">
    <text evidence="4">Alters growth in axenic culture and impairs conidia production and perithecia formation (PubMed:25727237). Abolishes the pathogenicity on oilseed rape leaves and results in a drastic decrease in expression of at least the three effector genes AvrLm1, AvrLm6 and AvrLm4-7, during infection (PubMed:25727237).</text>
</comment>
<comment type="similarity">
    <text evidence="6">Belongs to the EFG1/PHD1/stuA family.</text>
</comment>
<comment type="sequence caution" evidence="6">
    <conflict type="erroneous initiation">
        <sequence resource="EMBL-CDS" id="CBY02404"/>
    </conflict>
    <text>Extended N-terminus.</text>
</comment>
<name>STUA_LEPMJ</name>
<gene>
    <name evidence="5" type="primary">stuA</name>
    <name type="ORF">LEMA_P011910.1</name>
</gene>
<proteinExistence type="evidence at transcript level"/>
<organism>
    <name type="scientific">Leptosphaeria maculans (strain JN3 / isolate v23.1.3 / race Av1-4-5-6-7-8)</name>
    <name type="common">Blackleg fungus</name>
    <name type="synonym">Phoma lingam</name>
    <dbReference type="NCBI Taxonomy" id="985895"/>
    <lineage>
        <taxon>Eukaryota</taxon>
        <taxon>Fungi</taxon>
        <taxon>Dikarya</taxon>
        <taxon>Ascomycota</taxon>
        <taxon>Pezizomycotina</taxon>
        <taxon>Dothideomycetes</taxon>
        <taxon>Pleosporomycetidae</taxon>
        <taxon>Pleosporales</taxon>
        <taxon>Pleosporineae</taxon>
        <taxon>Leptosphaeriaceae</taxon>
        <taxon>Plenodomus</taxon>
        <taxon>Plenodomus lingam/Leptosphaeria maculans species complex</taxon>
    </lineage>
</organism>
<protein>
    <recommendedName>
        <fullName evidence="6">Cell pattern formation-associated protein stuA</fullName>
    </recommendedName>
    <alternativeName>
        <fullName evidence="1">Stunted protein A</fullName>
    </alternativeName>
</protein>
<feature type="chain" id="PRO_0000435977" description="Cell pattern formation-associated protein stuA">
    <location>
        <begin position="1"/>
        <end position="645"/>
    </location>
</feature>
<feature type="domain" description="HTH APSES-type" evidence="2">
    <location>
        <begin position="124"/>
        <end position="230"/>
    </location>
</feature>
<feature type="DNA-binding region" description="H-T-H motif" evidence="2">
    <location>
        <begin position="158"/>
        <end position="179"/>
    </location>
</feature>
<feature type="region of interest" description="Disordered" evidence="3">
    <location>
        <begin position="1"/>
        <end position="52"/>
    </location>
</feature>
<feature type="region of interest" description="Disordered" evidence="3">
    <location>
        <begin position="246"/>
        <end position="645"/>
    </location>
</feature>
<feature type="region of interest" description="Nuclear localization domain" evidence="1">
    <location>
        <begin position="585"/>
        <end position="613"/>
    </location>
</feature>
<feature type="compositionally biased region" description="Low complexity" evidence="3">
    <location>
        <begin position="18"/>
        <end position="52"/>
    </location>
</feature>
<feature type="compositionally biased region" description="Polar residues" evidence="3">
    <location>
        <begin position="254"/>
        <end position="271"/>
    </location>
</feature>
<feature type="compositionally biased region" description="Polar residues" evidence="3">
    <location>
        <begin position="279"/>
        <end position="288"/>
    </location>
</feature>
<feature type="compositionally biased region" description="Low complexity" evidence="3">
    <location>
        <begin position="317"/>
        <end position="330"/>
    </location>
</feature>
<feature type="compositionally biased region" description="Polar residues" evidence="3">
    <location>
        <begin position="336"/>
        <end position="365"/>
    </location>
</feature>
<feature type="compositionally biased region" description="Low complexity" evidence="3">
    <location>
        <begin position="469"/>
        <end position="481"/>
    </location>
</feature>
<feature type="compositionally biased region" description="Polar residues" evidence="3">
    <location>
        <begin position="502"/>
        <end position="542"/>
    </location>
</feature>
<feature type="compositionally biased region" description="Polar residues" evidence="3">
    <location>
        <begin position="569"/>
        <end position="584"/>
    </location>
</feature>
<feature type="compositionally biased region" description="Basic and acidic residues" evidence="3">
    <location>
        <begin position="586"/>
        <end position="597"/>
    </location>
</feature>
<evidence type="ECO:0000250" key="1">
    <source>
        <dbReference type="UniProtKB" id="P36011"/>
    </source>
</evidence>
<evidence type="ECO:0000255" key="2">
    <source>
        <dbReference type="PROSITE-ProRule" id="PRU00630"/>
    </source>
</evidence>
<evidence type="ECO:0000256" key="3">
    <source>
        <dbReference type="SAM" id="MobiDB-lite"/>
    </source>
</evidence>
<evidence type="ECO:0000269" key="4">
    <source>
    </source>
</evidence>
<evidence type="ECO:0000303" key="5">
    <source>
    </source>
</evidence>
<evidence type="ECO:0000305" key="6"/>